<evidence type="ECO:0000255" key="1">
    <source>
        <dbReference type="HAMAP-Rule" id="MF_03208"/>
    </source>
</evidence>
<evidence type="ECO:0000269" key="2">
    <source>
    </source>
</evidence>
<evidence type="ECO:0000269" key="3">
    <source>
    </source>
</evidence>
<evidence type="ECO:0000269" key="4">
    <source>
    </source>
</evidence>
<evidence type="ECO:0000303" key="5">
    <source>
    </source>
</evidence>
<evidence type="ECO:0000305" key="6"/>
<evidence type="ECO:0000305" key="7">
    <source>
    </source>
</evidence>
<evidence type="ECO:0000305" key="8">
    <source>
    </source>
</evidence>
<evidence type="ECO:0000312" key="9">
    <source>
        <dbReference type="PomBase" id="SPAC25B8.03"/>
    </source>
</evidence>
<dbReference type="EC" id="4.1.1.65" evidence="1"/>
<dbReference type="EMBL" id="CU329670">
    <property type="protein sequence ID" value="CAB61769.1"/>
    <property type="molecule type" value="Genomic_DNA"/>
</dbReference>
<dbReference type="PIR" id="T50190">
    <property type="entry name" value="T50190"/>
</dbReference>
<dbReference type="RefSeq" id="NP_594463.1">
    <property type="nucleotide sequence ID" value="NM_001019892.2"/>
</dbReference>
<dbReference type="SMR" id="Q9UTB5"/>
<dbReference type="FunCoup" id="Q9UTB5">
    <property type="interactions" value="269"/>
</dbReference>
<dbReference type="STRING" id="284812.Q9UTB5"/>
<dbReference type="iPTMnet" id="Q9UTB5"/>
<dbReference type="PaxDb" id="4896-SPAC25B8.03.1"/>
<dbReference type="EnsemblFungi" id="SPAC25B8.03.1">
    <property type="protein sequence ID" value="SPAC25B8.03.1:pep"/>
    <property type="gene ID" value="SPAC25B8.03"/>
</dbReference>
<dbReference type="GeneID" id="2541447"/>
<dbReference type="KEGG" id="spo:2541447"/>
<dbReference type="PomBase" id="SPAC25B8.03">
    <property type="gene designation" value="psd2"/>
</dbReference>
<dbReference type="VEuPathDB" id="FungiDB:SPAC25B8.03"/>
<dbReference type="eggNOG" id="KOG2420">
    <property type="taxonomic scope" value="Eukaryota"/>
</dbReference>
<dbReference type="HOGENOM" id="CLU_029061_1_1_1"/>
<dbReference type="InParanoid" id="Q9UTB5"/>
<dbReference type="OMA" id="RWVANQC"/>
<dbReference type="PhylomeDB" id="Q9UTB5"/>
<dbReference type="UniPathway" id="UPA00558">
    <property type="reaction ID" value="UER00616"/>
</dbReference>
<dbReference type="PRO" id="PR:Q9UTB5"/>
<dbReference type="Proteomes" id="UP000002485">
    <property type="component" value="Chromosome I"/>
</dbReference>
<dbReference type="GO" id="GO:0005789">
    <property type="term" value="C:endoplasmic reticulum membrane"/>
    <property type="evidence" value="ECO:0000314"/>
    <property type="project" value="UniProtKB"/>
</dbReference>
<dbReference type="GO" id="GO:0005811">
    <property type="term" value="C:lipid droplet"/>
    <property type="evidence" value="ECO:0000314"/>
    <property type="project" value="UniProtKB"/>
</dbReference>
<dbReference type="GO" id="GO:0005743">
    <property type="term" value="C:mitochondrial inner membrane"/>
    <property type="evidence" value="ECO:0000250"/>
    <property type="project" value="PomBase"/>
</dbReference>
<dbReference type="GO" id="GO:0005739">
    <property type="term" value="C:mitochondrion"/>
    <property type="evidence" value="ECO:0000314"/>
    <property type="project" value="UniProtKB"/>
</dbReference>
<dbReference type="GO" id="GO:0005635">
    <property type="term" value="C:nuclear envelope"/>
    <property type="evidence" value="ECO:0007005"/>
    <property type="project" value="PomBase"/>
</dbReference>
<dbReference type="GO" id="GO:0004609">
    <property type="term" value="F:phosphatidylserine decarboxylase activity"/>
    <property type="evidence" value="ECO:0000315"/>
    <property type="project" value="PomBase"/>
</dbReference>
<dbReference type="GO" id="GO:0140042">
    <property type="term" value="P:lipid droplet formation"/>
    <property type="evidence" value="ECO:0000315"/>
    <property type="project" value="UniProtKB"/>
</dbReference>
<dbReference type="GO" id="GO:0006656">
    <property type="term" value="P:phosphatidylcholine biosynthetic process"/>
    <property type="evidence" value="ECO:0000250"/>
    <property type="project" value="PomBase"/>
</dbReference>
<dbReference type="GO" id="GO:0006646">
    <property type="term" value="P:phosphatidylethanolamine biosynthetic process"/>
    <property type="evidence" value="ECO:0000315"/>
    <property type="project" value="PomBase"/>
</dbReference>
<dbReference type="GO" id="GO:0016540">
    <property type="term" value="P:protein autoprocessing"/>
    <property type="evidence" value="ECO:0007669"/>
    <property type="project" value="UniProtKB-UniRule"/>
</dbReference>
<dbReference type="HAMAP" id="MF_03208">
    <property type="entry name" value="PS_decarb_PSD_B_type1_euk"/>
    <property type="match status" value="1"/>
</dbReference>
<dbReference type="InterPro" id="IPR003817">
    <property type="entry name" value="PS_Dcarbxylase"/>
</dbReference>
<dbReference type="InterPro" id="IPR033177">
    <property type="entry name" value="PSD-B"/>
</dbReference>
<dbReference type="InterPro" id="IPR033661">
    <property type="entry name" value="PSD_type1_euk"/>
</dbReference>
<dbReference type="NCBIfam" id="TIGR00163">
    <property type="entry name" value="PS_decarb"/>
    <property type="match status" value="1"/>
</dbReference>
<dbReference type="PANTHER" id="PTHR10067">
    <property type="entry name" value="PHOSPHATIDYLSERINE DECARBOXYLASE"/>
    <property type="match status" value="1"/>
</dbReference>
<dbReference type="PANTHER" id="PTHR10067:SF19">
    <property type="entry name" value="PHOSPHATIDYLSERINE DECARBOXYLASE PROENZYME 2, MITOCHONDRIAL"/>
    <property type="match status" value="1"/>
</dbReference>
<dbReference type="Pfam" id="PF02666">
    <property type="entry name" value="PS_Dcarbxylase"/>
    <property type="match status" value="2"/>
</dbReference>
<keyword id="KW-0210">Decarboxylase</keyword>
<keyword id="KW-0256">Endoplasmic reticulum</keyword>
<keyword id="KW-0444">Lipid biosynthesis</keyword>
<keyword id="KW-0551">Lipid droplet</keyword>
<keyword id="KW-0443">Lipid metabolism</keyword>
<keyword id="KW-0456">Lyase</keyword>
<keyword id="KW-0472">Membrane</keyword>
<keyword id="KW-0496">Mitochondrion</keyword>
<keyword id="KW-0999">Mitochondrion inner membrane</keyword>
<keyword id="KW-0539">Nucleus</keyword>
<keyword id="KW-0594">Phospholipid biosynthesis</keyword>
<keyword id="KW-1208">Phospholipid metabolism</keyword>
<keyword id="KW-0670">Pyruvate</keyword>
<keyword id="KW-1185">Reference proteome</keyword>
<keyword id="KW-0809">Transit peptide</keyword>
<keyword id="KW-0812">Transmembrane</keyword>
<keyword id="KW-1133">Transmembrane helix</keyword>
<keyword id="KW-0865">Zymogen</keyword>
<organism>
    <name type="scientific">Schizosaccharomyces pombe (strain 972 / ATCC 24843)</name>
    <name type="common">Fission yeast</name>
    <dbReference type="NCBI Taxonomy" id="284812"/>
    <lineage>
        <taxon>Eukaryota</taxon>
        <taxon>Fungi</taxon>
        <taxon>Dikarya</taxon>
        <taxon>Ascomycota</taxon>
        <taxon>Taphrinomycotina</taxon>
        <taxon>Schizosaccharomycetes</taxon>
        <taxon>Schizosaccharomycetales</taxon>
        <taxon>Schizosaccharomycetaceae</taxon>
        <taxon>Schizosaccharomyces</taxon>
    </lineage>
</organism>
<feature type="transit peptide" description="Mitochondrion" evidence="1">
    <location>
        <begin position="1"/>
        <end position="21"/>
    </location>
</feature>
<feature type="chain" id="PRO_0000316032" description="Phosphatidylserine decarboxylase proenzyme 2, mitochondrial">
    <location>
        <begin position="22"/>
        <end position="516"/>
    </location>
</feature>
<feature type="chain" id="PRO_0000316033" description="Phosphatidylserine decarboxylase 2 beta chain" evidence="6">
    <location>
        <begin position="22"/>
        <end position="487"/>
    </location>
</feature>
<feature type="chain" id="PRO_0000316034" description="Phosphatidylserine decarboxylase 2 alpha chain" evidence="6">
    <location>
        <begin position="488"/>
        <end position="516"/>
    </location>
</feature>
<feature type="topological domain" description="Mitochondrial matrix" evidence="1">
    <location>
        <begin position="22"/>
        <end position="33"/>
    </location>
</feature>
<feature type="transmembrane region" description="Helical" evidence="1">
    <location>
        <begin position="34"/>
        <end position="52"/>
    </location>
</feature>
<feature type="topological domain" description="Mitochondrial intermembrane" evidence="1">
    <location>
        <begin position="53"/>
        <end position="516"/>
    </location>
</feature>
<feature type="active site" description="Charge relay system; for autoendoproteolytic cleavage activity" evidence="1">
    <location>
        <position position="159"/>
    </location>
</feature>
<feature type="active site" description="Charge relay system; for autoendoproteolytic cleavage activity" evidence="1">
    <location>
        <position position="373"/>
    </location>
</feature>
<feature type="active site" description="Charge relay system; for autoendoproteolytic cleavage activity" evidence="1">
    <location>
        <position position="488"/>
    </location>
</feature>
<feature type="active site" description="Schiff-base intermediate with substrate; via pyruvic acid; for decarboxylase activity" evidence="1">
    <location>
        <position position="488"/>
    </location>
</feature>
<feature type="site" description="Cleavage (non-hydrolytic); by autocatalysis" evidence="1">
    <location>
        <begin position="487"/>
        <end position="488"/>
    </location>
</feature>
<feature type="modified residue" description="Pyruvic acid (Ser); by autocatalysis" evidence="1">
    <location>
        <position position="488"/>
    </location>
</feature>
<proteinExistence type="inferred from homology"/>
<reference key="1">
    <citation type="journal article" date="2002" name="Nature">
        <title>The genome sequence of Schizosaccharomyces pombe.</title>
        <authorList>
            <person name="Wood V."/>
            <person name="Gwilliam R."/>
            <person name="Rajandream M.A."/>
            <person name="Lyne M.H."/>
            <person name="Lyne R."/>
            <person name="Stewart A."/>
            <person name="Sgouros J.G."/>
            <person name="Peat N."/>
            <person name="Hayles J."/>
            <person name="Baker S.G."/>
            <person name="Basham D."/>
            <person name="Bowman S."/>
            <person name="Brooks K."/>
            <person name="Brown D."/>
            <person name="Brown S."/>
            <person name="Chillingworth T."/>
            <person name="Churcher C.M."/>
            <person name="Collins M."/>
            <person name="Connor R."/>
            <person name="Cronin A."/>
            <person name="Davis P."/>
            <person name="Feltwell T."/>
            <person name="Fraser A."/>
            <person name="Gentles S."/>
            <person name="Goble A."/>
            <person name="Hamlin N."/>
            <person name="Harris D.E."/>
            <person name="Hidalgo J."/>
            <person name="Hodgson G."/>
            <person name="Holroyd S."/>
            <person name="Hornsby T."/>
            <person name="Howarth S."/>
            <person name="Huckle E.J."/>
            <person name="Hunt S."/>
            <person name="Jagels K."/>
            <person name="James K.D."/>
            <person name="Jones L."/>
            <person name="Jones M."/>
            <person name="Leather S."/>
            <person name="McDonald S."/>
            <person name="McLean J."/>
            <person name="Mooney P."/>
            <person name="Moule S."/>
            <person name="Mungall K.L."/>
            <person name="Murphy L.D."/>
            <person name="Niblett D."/>
            <person name="Odell C."/>
            <person name="Oliver K."/>
            <person name="O'Neil S."/>
            <person name="Pearson D."/>
            <person name="Quail M.A."/>
            <person name="Rabbinowitsch E."/>
            <person name="Rutherford K.M."/>
            <person name="Rutter S."/>
            <person name="Saunders D."/>
            <person name="Seeger K."/>
            <person name="Sharp S."/>
            <person name="Skelton J."/>
            <person name="Simmonds M.N."/>
            <person name="Squares R."/>
            <person name="Squares S."/>
            <person name="Stevens K."/>
            <person name="Taylor K."/>
            <person name="Taylor R.G."/>
            <person name="Tivey A."/>
            <person name="Walsh S.V."/>
            <person name="Warren T."/>
            <person name="Whitehead S."/>
            <person name="Woodward J.R."/>
            <person name="Volckaert G."/>
            <person name="Aert R."/>
            <person name="Robben J."/>
            <person name="Grymonprez B."/>
            <person name="Weltjens I."/>
            <person name="Vanstreels E."/>
            <person name="Rieger M."/>
            <person name="Schaefer M."/>
            <person name="Mueller-Auer S."/>
            <person name="Gabel C."/>
            <person name="Fuchs M."/>
            <person name="Duesterhoeft A."/>
            <person name="Fritzc C."/>
            <person name="Holzer E."/>
            <person name="Moestl D."/>
            <person name="Hilbert H."/>
            <person name="Borzym K."/>
            <person name="Langer I."/>
            <person name="Beck A."/>
            <person name="Lehrach H."/>
            <person name="Reinhardt R."/>
            <person name="Pohl T.M."/>
            <person name="Eger P."/>
            <person name="Zimmermann W."/>
            <person name="Wedler H."/>
            <person name="Wambutt R."/>
            <person name="Purnelle B."/>
            <person name="Goffeau A."/>
            <person name="Cadieu E."/>
            <person name="Dreano S."/>
            <person name="Gloux S."/>
            <person name="Lelaure V."/>
            <person name="Mottier S."/>
            <person name="Galibert F."/>
            <person name="Aves S.J."/>
            <person name="Xiang Z."/>
            <person name="Hunt C."/>
            <person name="Moore K."/>
            <person name="Hurst S.M."/>
            <person name="Lucas M."/>
            <person name="Rochet M."/>
            <person name="Gaillardin C."/>
            <person name="Tallada V.A."/>
            <person name="Garzon A."/>
            <person name="Thode G."/>
            <person name="Daga R.R."/>
            <person name="Cruzado L."/>
            <person name="Jimenez J."/>
            <person name="Sanchez M."/>
            <person name="del Rey F."/>
            <person name="Benito J."/>
            <person name="Dominguez A."/>
            <person name="Revuelta J.L."/>
            <person name="Moreno S."/>
            <person name="Armstrong J."/>
            <person name="Forsburg S.L."/>
            <person name="Cerutti L."/>
            <person name="Lowe T."/>
            <person name="McCombie W.R."/>
            <person name="Paulsen I."/>
            <person name="Potashkin J."/>
            <person name="Shpakovski G.V."/>
            <person name="Ussery D."/>
            <person name="Barrell B.G."/>
            <person name="Nurse P."/>
        </authorList>
    </citation>
    <scope>NUCLEOTIDE SEQUENCE [LARGE SCALE GENOMIC DNA]</scope>
    <source>
        <strain>972 / ATCC 24843</strain>
    </source>
</reference>
<reference key="2">
    <citation type="journal article" date="2006" name="Nat. Biotechnol.">
        <title>ORFeome cloning and global analysis of protein localization in the fission yeast Schizosaccharomyces pombe.</title>
        <authorList>
            <person name="Matsuyama A."/>
            <person name="Arai R."/>
            <person name="Yashiroda Y."/>
            <person name="Shirai A."/>
            <person name="Kamata A."/>
            <person name="Sekido S."/>
            <person name="Kobayashi Y."/>
            <person name="Hashimoto A."/>
            <person name="Hamamoto M."/>
            <person name="Hiraoka Y."/>
            <person name="Horinouchi S."/>
            <person name="Yoshida M."/>
        </authorList>
    </citation>
    <scope>SUBCELLULAR LOCATION [LARGE SCALE ANALYSIS]</scope>
</reference>
<reference key="3">
    <citation type="journal article" date="2009" name="Eukaryot. Cell">
        <title>Phosphatidylethanolamine is required for normal cell morphology and cytokinesis in the fission yeast Schizosaccharomyces pombe.</title>
        <authorList>
            <person name="Luo J."/>
            <person name="Matsuo Y."/>
            <person name="Gulis G."/>
            <person name="Hinz H."/>
            <person name="Patton-Vogt J."/>
            <person name="Marcus S."/>
        </authorList>
    </citation>
    <scope>FUNCTION</scope>
</reference>
<reference key="4">
    <citation type="journal article" date="2022" name="Mol. Biol. Cell">
        <title>ER-localized phosphatidylethanolamine synthase plays a conserved role in lipid droplet formation.</title>
        <authorList>
            <person name="Gok M.O."/>
            <person name="Speer N.O."/>
            <person name="Henne W.M."/>
            <person name="Friedman J.R."/>
        </authorList>
    </citation>
    <scope>FUNCTION</scope>
    <scope>SUBCELLULAR LOCATION</scope>
    <scope>DISRUPTION PHENOTYPE</scope>
</reference>
<accession>Q9UTB5</accession>
<comment type="function">
    <text evidence="1 3 4">Catalyzes the formation of phosphatidylethanolamine (PtdEtn) from phosphatidylserine (PtdSer). Plays a central role in phospholipid metabolism and in the interorganelle trafficking of phosphatidylserine (By similarity). Together with psd1 and psd3, responsible for the majority of phosphatidylethanolamine synthesis (PubMed:19286980). Plays a role in lipid droplet biogenesis at the endoplasmic reticulum membrane (PubMed:34818062).</text>
</comment>
<comment type="catalytic activity">
    <reaction evidence="1">
        <text>a 1,2-diacyl-sn-glycero-3-phospho-L-serine + H(+) = a 1,2-diacyl-sn-glycero-3-phosphoethanolamine + CO2</text>
        <dbReference type="Rhea" id="RHEA:20828"/>
        <dbReference type="ChEBI" id="CHEBI:15378"/>
        <dbReference type="ChEBI" id="CHEBI:16526"/>
        <dbReference type="ChEBI" id="CHEBI:57262"/>
        <dbReference type="ChEBI" id="CHEBI:64612"/>
        <dbReference type="EC" id="4.1.1.65"/>
    </reaction>
</comment>
<comment type="cofactor">
    <cofactor evidence="1">
        <name>pyruvate</name>
        <dbReference type="ChEBI" id="CHEBI:15361"/>
    </cofactor>
    <text evidence="1">Binds 1 pyruvoyl group covalently per subunit.</text>
</comment>
<comment type="pathway">
    <text evidence="1">Phospholipid metabolism; phosphatidylethanolamine biosynthesis; phosphatidylethanolamine from CDP-diacylglycerol: step 2/2.</text>
</comment>
<comment type="subunit">
    <text evidence="1">Heterodimer of a large membrane-associated beta subunit and a small pyruvoyl-containing alpha subunit.</text>
</comment>
<comment type="subcellular location">
    <molecule>Phosphatidylserine decarboxylase 2 beta chain</molecule>
    <subcellularLocation>
        <location evidence="7 8">Mitochondrion</location>
    </subcellularLocation>
    <subcellularLocation>
        <location evidence="1">Mitochondrion inner membrane</location>
        <topology evidence="1">Single-pass membrane protein</topology>
        <orientation evidence="1">Intermembrane side</orientation>
    </subcellularLocation>
    <subcellularLocation>
        <location evidence="2">Nucleus envelope</location>
    </subcellularLocation>
</comment>
<comment type="subcellular location">
    <molecule>Phosphatidylserine decarboxylase 2 alpha chain</molecule>
    <subcellularLocation>
        <location evidence="7 8">Mitochondrion</location>
    </subcellularLocation>
    <subcellularLocation>
        <location evidence="1">Mitochondrion inner membrane</location>
        <topology evidence="1">Peripheral membrane protein</topology>
        <orientation evidence="1">Intermembrane side</orientation>
    </subcellularLocation>
    <subcellularLocation>
        <location evidence="2">Nucleus envelope</location>
    </subcellularLocation>
    <text evidence="1">Anchored to the mitochondrial inner membrane through its interaction with the integral membrane beta chain.</text>
</comment>
<comment type="subcellular location">
    <subcellularLocation>
        <location evidence="4">Lipid droplet</location>
    </subcellularLocation>
    <subcellularLocation>
        <location evidence="4">Endoplasmic reticulum membrane</location>
    </subcellularLocation>
</comment>
<comment type="PTM">
    <text evidence="1">Is synthesized initially as an inactive proenzyme. Formation of the active enzyme involves a self-maturation process in which the active site pyruvoyl group is generated from an internal serine residue via an autocatalytic post-translational modification. Two non-identical subunits are generated from the proenzyme in this reaction, and the pyruvate is formed at the N-terminus of the alpha chain, which is derived from the carboxyl end of the proenzyme. The autoendoproteolytic cleavage occurs by a canonical serine protease mechanism, in which the side chain hydroxyl group of the serine supplies its oxygen atom to form the C-terminus of the beta chain, while the remainder of the serine residue undergoes an oxidative deamination to produce ammonia and the pyruvoyl prosthetic group on the alpha chain. During this reaction, the Ser that is part of the protease active site of the proenzyme becomes the pyruvoyl prosthetic group, which constitutes an essential element of the active site of the mature decarboxylase.</text>
</comment>
<comment type="disruption phenotype">
    <text evidence="4">Normal growth on non-fermentable carbon sources (ethanol and glycerol).</text>
</comment>
<comment type="similarity">
    <text evidence="1">Belongs to the phosphatidylserine decarboxylase family. PSD-B subfamily. Eukaryotic type I sub-subfamily.</text>
</comment>
<name>PSD2_SCHPO</name>
<sequence>MRPRQRFRRFHPRWSKVNLRGFGGVGALKGVKALNGMNVRVSMRLKWISNRIHRIRRSRRLGRLSISVRPNGSWQVYLLSSLPLRSLSRVWGQFNRAHLPTFLRTPGFKLYAWVFGCNLSELKDPDLTHYRNFQDFFCRELRPETRPVDPVSPVVSPVDGRIVCQGVVDNNRIQHVKGLSYSLEALLGGISSSNPLVVNFEDEITPDLIQKHEQFAEQHSISLNSNNRYRKADASAAVVDEHSDEEALLCAFTDHPHFYLNDSRNSLNYFCPFSAFEDISNSVRSSCGKRLSPSSNFDLNNLGGDDDLRSESSSDFESAPASILEHEPTNWDDWVQEADVTDIDSLPWHNIRPGNKLFYSVIYLAPGDYHRFHSPADWVIESRRHFSGELFSVSPFLARRLHNLFVLNERVALLGRYEHGFMSMIPVGATNVGSIVINCDPTLSTNRLVLRKKSLGTFQEAVYKNASPVLDGMPVSRGEQVGGFQLGSTVVLVFEAPADFEFSTYQGQYVRVGEAL</sequence>
<gene>
    <name evidence="5" type="primary">psd2</name>
    <name evidence="9" type="ORF">SPAC25B8.03</name>
</gene>
<protein>
    <recommendedName>
        <fullName evidence="5">Phosphatidylserine decarboxylase proenzyme 2, mitochondrial</fullName>
        <ecNumber evidence="1">4.1.1.65</ecNumber>
    </recommendedName>
    <component>
        <recommendedName>
            <fullName evidence="6">Phosphatidylserine decarboxylase 2 beta chain</fullName>
        </recommendedName>
    </component>
    <component>
        <recommendedName>
            <fullName evidence="6">Phosphatidylserine decarboxylase 2 alpha chain</fullName>
        </recommendedName>
    </component>
</protein>